<keyword id="KW-1003">Cell membrane</keyword>
<keyword id="KW-1015">Disulfide bond</keyword>
<keyword id="KW-0297">G-protein coupled receptor</keyword>
<keyword id="KW-0325">Glycoprotein</keyword>
<keyword id="KW-0472">Membrane</keyword>
<keyword id="KW-0552">Olfaction</keyword>
<keyword id="KW-0675">Receptor</keyword>
<keyword id="KW-1185">Reference proteome</keyword>
<keyword id="KW-0716">Sensory transduction</keyword>
<keyword id="KW-0807">Transducer</keyword>
<keyword id="KW-0812">Transmembrane</keyword>
<keyword id="KW-1133">Transmembrane helix</keyword>
<sequence>MRPSSNVTEFVLLGLTQDPDVKKTLFVMFLLIYIVTMVGNLLIWVTTIGSPSLGSLMYFFLAYLSLMDAIYSTAMSPKLMIDLLCDKIAISLSACMGQLFIEHLLGGAEVFLLVVMAYDRYVAISKPLHYLNIMNRLVCILLLVVAMIGGFVHSVVQIVFLYSLPICGPNVIDHSVCDMYPLLELLCLDTYFIGLTVVANGGIICMVIFTFLLISCGVILNFLKTYSQEERHKALPTCISHIIVVALVFVPCIFMYVRPVSNFPFDKLMTVFYSIITLMLNPLIYSLRQSEMKNAMKNLWCEKLSIVRKRVSPTLNIFIPSSKATNRR</sequence>
<reference key="1">
    <citation type="submission" date="2001-07" db="EMBL/GenBank/DDBJ databases">
        <title>Genome-wide discovery and analysis of human seven transmembrane helix receptor genes.</title>
        <authorList>
            <person name="Suwa M."/>
            <person name="Sato T."/>
            <person name="Okouchi I."/>
            <person name="Arita M."/>
            <person name="Futami K."/>
            <person name="Matsumoto S."/>
            <person name="Tsutsumi S."/>
            <person name="Aburatani H."/>
            <person name="Asai K."/>
            <person name="Akiyama Y."/>
        </authorList>
    </citation>
    <scope>NUCLEOTIDE SEQUENCE [GENOMIC DNA]</scope>
</reference>
<reference key="2">
    <citation type="journal article" date="2004" name="Proc. Natl. Acad. Sci. U.S.A.">
        <title>The human olfactory receptor gene family.</title>
        <authorList>
            <person name="Malnic B."/>
            <person name="Godfrey P.A."/>
            <person name="Buck L.B."/>
        </authorList>
    </citation>
    <scope>IDENTIFICATION</scope>
</reference>
<reference key="3">
    <citation type="journal article" date="2004" name="Proc. Natl. Acad. Sci. U.S.A.">
        <authorList>
            <person name="Malnic B."/>
            <person name="Godfrey P.A."/>
            <person name="Buck L.B."/>
        </authorList>
    </citation>
    <scope>ERRATUM OF PUBMED:14983052</scope>
</reference>
<evidence type="ECO:0000255" key="1"/>
<evidence type="ECO:0000255" key="2">
    <source>
        <dbReference type="PROSITE-ProRule" id="PRU00521"/>
    </source>
</evidence>
<evidence type="ECO:0000305" key="3"/>
<proteinExistence type="inferred from homology"/>
<organism>
    <name type="scientific">Homo sapiens</name>
    <name type="common">Human</name>
    <dbReference type="NCBI Taxonomy" id="9606"/>
    <lineage>
        <taxon>Eukaryota</taxon>
        <taxon>Metazoa</taxon>
        <taxon>Chordata</taxon>
        <taxon>Craniata</taxon>
        <taxon>Vertebrata</taxon>
        <taxon>Euteleostomi</taxon>
        <taxon>Mammalia</taxon>
        <taxon>Eutheria</taxon>
        <taxon>Euarchontoglires</taxon>
        <taxon>Primates</taxon>
        <taxon>Haplorrhini</taxon>
        <taxon>Catarrhini</taxon>
        <taxon>Hominidae</taxon>
        <taxon>Homo</taxon>
    </lineage>
</organism>
<name>O4A16_HUMAN</name>
<dbReference type="EMBL" id="AB065519">
    <property type="protein sequence ID" value="BAC05767.1"/>
    <property type="molecule type" value="Genomic_DNA"/>
</dbReference>
<dbReference type="EMBL" id="BK004249">
    <property type="protein sequence ID" value="DAA04647.1"/>
    <property type="molecule type" value="Genomic_DNA"/>
</dbReference>
<dbReference type="CCDS" id="CCDS31499.1"/>
<dbReference type="RefSeq" id="NP_001005274.1">
    <property type="nucleotide sequence ID" value="NM_001005274.1"/>
</dbReference>
<dbReference type="SMR" id="Q8NH70"/>
<dbReference type="BioGRID" id="123449">
    <property type="interactions" value="1"/>
</dbReference>
<dbReference type="FunCoup" id="Q8NH70">
    <property type="interactions" value="416"/>
</dbReference>
<dbReference type="IntAct" id="Q8NH70">
    <property type="interactions" value="1"/>
</dbReference>
<dbReference type="MINT" id="Q8NH70"/>
<dbReference type="STRING" id="9606.ENSP00000325128"/>
<dbReference type="GlyCosmos" id="Q8NH70">
    <property type="glycosylation" value="1 site, No reported glycans"/>
</dbReference>
<dbReference type="GlyGen" id="Q8NH70">
    <property type="glycosylation" value="1 site, 2 N-linked glycans (1 site)"/>
</dbReference>
<dbReference type="iPTMnet" id="Q8NH70"/>
<dbReference type="PhosphoSitePlus" id="Q8NH70"/>
<dbReference type="BioMuta" id="OR4A16"/>
<dbReference type="DMDM" id="38372821"/>
<dbReference type="jPOST" id="Q8NH70"/>
<dbReference type="MassIVE" id="Q8NH70"/>
<dbReference type="PaxDb" id="9606-ENSP00000325128"/>
<dbReference type="ProteomicsDB" id="73674"/>
<dbReference type="Antibodypedia" id="58928">
    <property type="antibodies" value="54 antibodies from 15 providers"/>
</dbReference>
<dbReference type="DNASU" id="81327"/>
<dbReference type="Ensembl" id="ENST00000314721.5">
    <property type="protein sequence ID" value="ENSP00000325128.2"/>
    <property type="gene ID" value="ENSG00000181961.5"/>
</dbReference>
<dbReference type="GeneID" id="81327"/>
<dbReference type="KEGG" id="hsa:81327"/>
<dbReference type="MANE-Select" id="ENST00000314721.5">
    <property type="protein sequence ID" value="ENSP00000325128.2"/>
    <property type="RefSeq nucleotide sequence ID" value="NM_001005274.1"/>
    <property type="RefSeq protein sequence ID" value="NP_001005274.1"/>
</dbReference>
<dbReference type="UCSC" id="uc010rie.2">
    <property type="organism name" value="human"/>
</dbReference>
<dbReference type="AGR" id="HGNC:15153"/>
<dbReference type="CTD" id="81327"/>
<dbReference type="DisGeNET" id="81327"/>
<dbReference type="GeneCards" id="OR4A16"/>
<dbReference type="HGNC" id="HGNC:15153">
    <property type="gene designation" value="OR4A16"/>
</dbReference>
<dbReference type="HPA" id="ENSG00000181961">
    <property type="expression patterns" value="Not detected"/>
</dbReference>
<dbReference type="neXtProt" id="NX_Q8NH70"/>
<dbReference type="PharmGKB" id="PA32235"/>
<dbReference type="VEuPathDB" id="HostDB:ENSG00000181961"/>
<dbReference type="eggNOG" id="ENOG502SJPV">
    <property type="taxonomic scope" value="Eukaryota"/>
</dbReference>
<dbReference type="GeneTree" id="ENSGT00940000158620"/>
<dbReference type="HOGENOM" id="CLU_012526_8_1_1"/>
<dbReference type="InParanoid" id="Q8NH70"/>
<dbReference type="OMA" id="WCEKLSI"/>
<dbReference type="OrthoDB" id="10017003at2759"/>
<dbReference type="PAN-GO" id="Q8NH70">
    <property type="GO annotations" value="2 GO annotations based on evolutionary models"/>
</dbReference>
<dbReference type="PhylomeDB" id="Q8NH70"/>
<dbReference type="TreeFam" id="TF337251"/>
<dbReference type="PathwayCommons" id="Q8NH70"/>
<dbReference type="Reactome" id="R-HSA-9752946">
    <property type="pathway name" value="Expression and translocation of olfactory receptors"/>
</dbReference>
<dbReference type="BioGRID-ORCS" id="81327">
    <property type="hits" value="9 hits in 737 CRISPR screens"/>
</dbReference>
<dbReference type="GeneWiki" id="OR4A16"/>
<dbReference type="GenomeRNAi" id="81327"/>
<dbReference type="Pharos" id="Q8NH70">
    <property type="development level" value="Tdark"/>
</dbReference>
<dbReference type="PRO" id="PR:Q8NH70"/>
<dbReference type="Proteomes" id="UP000005640">
    <property type="component" value="Chromosome 11"/>
</dbReference>
<dbReference type="RNAct" id="Q8NH70">
    <property type="molecule type" value="protein"/>
</dbReference>
<dbReference type="Bgee" id="ENSG00000181961">
    <property type="expression patterns" value="Expressed in male germ line stem cell (sensu Vertebrata) in testis"/>
</dbReference>
<dbReference type="ExpressionAtlas" id="Q8NH70">
    <property type="expression patterns" value="baseline and differential"/>
</dbReference>
<dbReference type="GO" id="GO:0005886">
    <property type="term" value="C:plasma membrane"/>
    <property type="evidence" value="ECO:0000318"/>
    <property type="project" value="GO_Central"/>
</dbReference>
<dbReference type="GO" id="GO:0004930">
    <property type="term" value="F:G protein-coupled receptor activity"/>
    <property type="evidence" value="ECO:0007669"/>
    <property type="project" value="UniProtKB-KW"/>
</dbReference>
<dbReference type="GO" id="GO:0004984">
    <property type="term" value="F:olfactory receptor activity"/>
    <property type="evidence" value="ECO:0000318"/>
    <property type="project" value="GO_Central"/>
</dbReference>
<dbReference type="CDD" id="cd15939">
    <property type="entry name" value="7tmA_OR4A-like"/>
    <property type="match status" value="1"/>
</dbReference>
<dbReference type="FunFam" id="1.20.1070.10:FF:000007">
    <property type="entry name" value="Olfactory receptor"/>
    <property type="match status" value="1"/>
</dbReference>
<dbReference type="Gene3D" id="1.20.1070.10">
    <property type="entry name" value="Rhodopsin 7-helix transmembrane proteins"/>
    <property type="match status" value="1"/>
</dbReference>
<dbReference type="InterPro" id="IPR000276">
    <property type="entry name" value="GPCR_Rhodpsn"/>
</dbReference>
<dbReference type="InterPro" id="IPR017452">
    <property type="entry name" value="GPCR_Rhodpsn_7TM"/>
</dbReference>
<dbReference type="InterPro" id="IPR000725">
    <property type="entry name" value="Olfact_rcpt"/>
</dbReference>
<dbReference type="InterPro" id="IPR050427">
    <property type="entry name" value="Olfactory_Receptors"/>
</dbReference>
<dbReference type="PANTHER" id="PTHR48002">
    <property type="entry name" value="OLFACTORY RECEPTOR"/>
    <property type="match status" value="1"/>
</dbReference>
<dbReference type="Pfam" id="PF13853">
    <property type="entry name" value="7tm_4"/>
    <property type="match status" value="1"/>
</dbReference>
<dbReference type="PRINTS" id="PR00237">
    <property type="entry name" value="GPCRRHODOPSN"/>
</dbReference>
<dbReference type="PRINTS" id="PR00245">
    <property type="entry name" value="OLFACTORYR"/>
</dbReference>
<dbReference type="SUPFAM" id="SSF81321">
    <property type="entry name" value="Family A G protein-coupled receptor-like"/>
    <property type="match status" value="1"/>
</dbReference>
<dbReference type="PROSITE" id="PS00237">
    <property type="entry name" value="G_PROTEIN_RECEP_F1_1"/>
    <property type="match status" value="1"/>
</dbReference>
<dbReference type="PROSITE" id="PS50262">
    <property type="entry name" value="G_PROTEIN_RECEP_F1_2"/>
    <property type="match status" value="1"/>
</dbReference>
<feature type="chain" id="PRO_0000150526" description="Olfactory receptor 4A16">
    <location>
        <begin position="1"/>
        <end position="328"/>
    </location>
</feature>
<feature type="topological domain" description="Extracellular" evidence="1">
    <location>
        <begin position="1"/>
        <end position="23"/>
    </location>
</feature>
<feature type="transmembrane region" description="Helical; Name=1" evidence="1">
    <location>
        <begin position="24"/>
        <end position="47"/>
    </location>
</feature>
<feature type="topological domain" description="Cytoplasmic" evidence="1">
    <location>
        <begin position="48"/>
        <end position="55"/>
    </location>
</feature>
<feature type="transmembrane region" description="Helical; Name=2" evidence="1">
    <location>
        <begin position="56"/>
        <end position="77"/>
    </location>
</feature>
<feature type="topological domain" description="Extracellular" evidence="1">
    <location>
        <begin position="78"/>
        <end position="98"/>
    </location>
</feature>
<feature type="transmembrane region" description="Helical; Name=3" evidence="1">
    <location>
        <begin position="99"/>
        <end position="118"/>
    </location>
</feature>
<feature type="topological domain" description="Cytoplasmic" evidence="1">
    <location>
        <begin position="119"/>
        <end position="137"/>
    </location>
</feature>
<feature type="transmembrane region" description="Helical; Name=4" evidence="1">
    <location>
        <begin position="138"/>
        <end position="156"/>
    </location>
</feature>
<feature type="topological domain" description="Extracellular" evidence="1">
    <location>
        <begin position="157"/>
        <end position="193"/>
    </location>
</feature>
<feature type="transmembrane region" description="Helical; Name=5" evidence="1">
    <location>
        <begin position="194"/>
        <end position="217"/>
    </location>
</feature>
<feature type="topological domain" description="Cytoplasmic" evidence="1">
    <location>
        <begin position="218"/>
        <end position="233"/>
    </location>
</feature>
<feature type="transmembrane region" description="Helical; Name=6" evidence="1">
    <location>
        <begin position="234"/>
        <end position="256"/>
    </location>
</feature>
<feature type="topological domain" description="Extracellular" evidence="1">
    <location>
        <begin position="257"/>
        <end position="267"/>
    </location>
</feature>
<feature type="transmembrane region" description="Helical; Name=7" evidence="1">
    <location>
        <begin position="268"/>
        <end position="287"/>
    </location>
</feature>
<feature type="topological domain" description="Cytoplasmic" evidence="1">
    <location>
        <begin position="288"/>
        <end position="328"/>
    </location>
</feature>
<feature type="glycosylation site" description="N-linked (GlcNAc...) asparagine" evidence="1">
    <location>
        <position position="6"/>
    </location>
</feature>
<feature type="disulfide bond" evidence="2">
    <location>
        <begin position="95"/>
        <end position="187"/>
    </location>
</feature>
<feature type="sequence variant" id="VAR_034187" description="In dbSNP:rs11229158.">
    <original>L</original>
    <variation>I</variation>
    <location>
        <position position="188"/>
    </location>
</feature>
<feature type="sequence variant" id="VAR_053164" description="In dbSNP:rs12807769.">
    <original>H</original>
    <variation>R</variation>
    <location>
        <position position="232"/>
    </location>
</feature>
<feature type="sequence variant" id="VAR_034188" description="In dbSNP:rs10896659.">
    <original>K</original>
    <variation>M</variation>
    <location>
        <position position="303"/>
    </location>
</feature>
<comment type="function">
    <text evidence="3">Odorant receptor.</text>
</comment>
<comment type="subcellular location">
    <subcellularLocation>
        <location>Cell membrane</location>
        <topology>Multi-pass membrane protein</topology>
    </subcellularLocation>
</comment>
<comment type="similarity">
    <text evidence="2">Belongs to the G-protein coupled receptor 1 family.</text>
</comment>
<comment type="online information" name="Human Olfactory Receptor Data Exploratorium (HORDE)">
    <link uri="http://genome.weizmann.ac.il/horde/card/index/symbol:OR4A16"/>
</comment>
<gene>
    <name type="primary">OR4A16</name>
</gene>
<accession>Q8NH70</accession>
<accession>Q6IFL3</accession>
<protein>
    <recommendedName>
        <fullName>Olfactory receptor 4A16</fullName>
    </recommendedName>
    <alternativeName>
        <fullName>Olfactory receptor OR11-117</fullName>
    </alternativeName>
</protein>